<gene>
    <name evidence="1" type="primary">nadD</name>
    <name type="ordered locus">RHOS4_21920</name>
    <name type="ORF">RSP_0586</name>
</gene>
<organism>
    <name type="scientific">Cereibacter sphaeroides (strain ATCC 17023 / DSM 158 / JCM 6121 / CCUG 31486 / LMG 2827 / NBRC 12203 / NCIMB 8253 / ATH 2.4.1.)</name>
    <name type="common">Rhodobacter sphaeroides</name>
    <dbReference type="NCBI Taxonomy" id="272943"/>
    <lineage>
        <taxon>Bacteria</taxon>
        <taxon>Pseudomonadati</taxon>
        <taxon>Pseudomonadota</taxon>
        <taxon>Alphaproteobacteria</taxon>
        <taxon>Rhodobacterales</taxon>
        <taxon>Paracoccaceae</taxon>
        <taxon>Cereibacter</taxon>
    </lineage>
</organism>
<reference key="1">
    <citation type="submission" date="2005-09" db="EMBL/GenBank/DDBJ databases">
        <title>Complete sequence of chromosome 1 of Rhodobacter sphaeroides 2.4.1.</title>
        <authorList>
            <person name="Copeland A."/>
            <person name="Lucas S."/>
            <person name="Lapidus A."/>
            <person name="Barry K."/>
            <person name="Detter J.C."/>
            <person name="Glavina T."/>
            <person name="Hammon N."/>
            <person name="Israni S."/>
            <person name="Pitluck S."/>
            <person name="Richardson P."/>
            <person name="Mackenzie C."/>
            <person name="Choudhary M."/>
            <person name="Larimer F."/>
            <person name="Hauser L.J."/>
            <person name="Land M."/>
            <person name="Donohue T.J."/>
            <person name="Kaplan S."/>
        </authorList>
    </citation>
    <scope>NUCLEOTIDE SEQUENCE [LARGE SCALE GENOMIC DNA]</scope>
    <source>
        <strain>ATCC 17023 / DSM 158 / JCM 6121 / CCUG 31486 / LMG 2827 / NBRC 12203 / NCIMB 8253 / ATH 2.4.1.</strain>
    </source>
</reference>
<feature type="chain" id="PRO_0000310135" description="Probable nicotinate-nucleotide adenylyltransferase">
    <location>
        <begin position="1"/>
        <end position="189"/>
    </location>
</feature>
<name>NADD_CERS4</name>
<comment type="function">
    <text evidence="1">Catalyzes the reversible adenylation of nicotinate mononucleotide (NaMN) to nicotinic acid adenine dinucleotide (NaAD).</text>
</comment>
<comment type="catalytic activity">
    <reaction evidence="1">
        <text>nicotinate beta-D-ribonucleotide + ATP + H(+) = deamido-NAD(+) + diphosphate</text>
        <dbReference type="Rhea" id="RHEA:22860"/>
        <dbReference type="ChEBI" id="CHEBI:15378"/>
        <dbReference type="ChEBI" id="CHEBI:30616"/>
        <dbReference type="ChEBI" id="CHEBI:33019"/>
        <dbReference type="ChEBI" id="CHEBI:57502"/>
        <dbReference type="ChEBI" id="CHEBI:58437"/>
        <dbReference type="EC" id="2.7.7.18"/>
    </reaction>
</comment>
<comment type="pathway">
    <text evidence="1">Cofactor biosynthesis; NAD(+) biosynthesis; deamido-NAD(+) from nicotinate D-ribonucleotide: step 1/1.</text>
</comment>
<comment type="similarity">
    <text evidence="1">Belongs to the NadD family.</text>
</comment>
<accession>Q3J0C4</accession>
<sequence length="189" mass="21065">MVVGLLGGSFDPPHPGHVHITREALKRFGLDRVWWLVSPGNPLKPRPPAPLARRLAEARRLMRHPRVAVTGLEAEIGTRFTAETLAVLQRRYPGVRFVWLMGADNLAQFHRWERWRAIMESVPVGVLARPGAGLRARTSPAARRYASALLPEAEAARLGRSAAPAWCFVNLPMMDLSSTEIRATGRWRG</sequence>
<protein>
    <recommendedName>
        <fullName evidence="1">Probable nicotinate-nucleotide adenylyltransferase</fullName>
        <ecNumber evidence="1">2.7.7.18</ecNumber>
    </recommendedName>
    <alternativeName>
        <fullName evidence="1">Deamido-NAD(+) diphosphorylase</fullName>
    </alternativeName>
    <alternativeName>
        <fullName evidence="1">Deamido-NAD(+) pyrophosphorylase</fullName>
    </alternativeName>
    <alternativeName>
        <fullName evidence="1">Nicotinate mononucleotide adenylyltransferase</fullName>
        <shortName evidence="1">NaMN adenylyltransferase</shortName>
    </alternativeName>
</protein>
<keyword id="KW-0067">ATP-binding</keyword>
<keyword id="KW-0520">NAD</keyword>
<keyword id="KW-0547">Nucleotide-binding</keyword>
<keyword id="KW-0548">Nucleotidyltransferase</keyword>
<keyword id="KW-0662">Pyridine nucleotide biosynthesis</keyword>
<keyword id="KW-1185">Reference proteome</keyword>
<keyword id="KW-0808">Transferase</keyword>
<evidence type="ECO:0000255" key="1">
    <source>
        <dbReference type="HAMAP-Rule" id="MF_00244"/>
    </source>
</evidence>
<dbReference type="EC" id="2.7.7.18" evidence="1"/>
<dbReference type="EMBL" id="CP000143">
    <property type="protein sequence ID" value="ABA79760.1"/>
    <property type="molecule type" value="Genomic_DNA"/>
</dbReference>
<dbReference type="RefSeq" id="YP_353661.1">
    <property type="nucleotide sequence ID" value="NC_007493.2"/>
</dbReference>
<dbReference type="SMR" id="Q3J0C4"/>
<dbReference type="STRING" id="272943.RSP_0586"/>
<dbReference type="EnsemblBacteria" id="ABA79760">
    <property type="protein sequence ID" value="ABA79760"/>
    <property type="gene ID" value="RSP_0586"/>
</dbReference>
<dbReference type="KEGG" id="rsp:RSP_0586"/>
<dbReference type="PATRIC" id="fig|272943.9.peg.2538"/>
<dbReference type="eggNOG" id="COG1057">
    <property type="taxonomic scope" value="Bacteria"/>
</dbReference>
<dbReference type="OrthoDB" id="5295945at2"/>
<dbReference type="PhylomeDB" id="Q3J0C4"/>
<dbReference type="UniPathway" id="UPA00253">
    <property type="reaction ID" value="UER00332"/>
</dbReference>
<dbReference type="Proteomes" id="UP000002703">
    <property type="component" value="Chromosome 1"/>
</dbReference>
<dbReference type="GO" id="GO:0005524">
    <property type="term" value="F:ATP binding"/>
    <property type="evidence" value="ECO:0007669"/>
    <property type="project" value="UniProtKB-KW"/>
</dbReference>
<dbReference type="GO" id="GO:0004515">
    <property type="term" value="F:nicotinate-nucleotide adenylyltransferase activity"/>
    <property type="evidence" value="ECO:0007669"/>
    <property type="project" value="UniProtKB-UniRule"/>
</dbReference>
<dbReference type="GO" id="GO:0009435">
    <property type="term" value="P:NAD biosynthetic process"/>
    <property type="evidence" value="ECO:0007669"/>
    <property type="project" value="UniProtKB-UniRule"/>
</dbReference>
<dbReference type="CDD" id="cd02165">
    <property type="entry name" value="NMNAT"/>
    <property type="match status" value="1"/>
</dbReference>
<dbReference type="Gene3D" id="3.40.50.620">
    <property type="entry name" value="HUPs"/>
    <property type="match status" value="1"/>
</dbReference>
<dbReference type="HAMAP" id="MF_00244">
    <property type="entry name" value="NaMN_adenylyltr"/>
    <property type="match status" value="1"/>
</dbReference>
<dbReference type="InterPro" id="IPR004821">
    <property type="entry name" value="Cyt_trans-like"/>
</dbReference>
<dbReference type="InterPro" id="IPR005248">
    <property type="entry name" value="NadD/NMNAT"/>
</dbReference>
<dbReference type="InterPro" id="IPR014729">
    <property type="entry name" value="Rossmann-like_a/b/a_fold"/>
</dbReference>
<dbReference type="NCBIfam" id="TIGR00125">
    <property type="entry name" value="cyt_tran_rel"/>
    <property type="match status" value="1"/>
</dbReference>
<dbReference type="NCBIfam" id="TIGR00482">
    <property type="entry name" value="nicotinate (nicotinamide) nucleotide adenylyltransferase"/>
    <property type="match status" value="1"/>
</dbReference>
<dbReference type="NCBIfam" id="NF000843">
    <property type="entry name" value="PRK00071.2-2"/>
    <property type="match status" value="1"/>
</dbReference>
<dbReference type="NCBIfam" id="NF000845">
    <property type="entry name" value="PRK00071.2-4"/>
    <property type="match status" value="1"/>
</dbReference>
<dbReference type="PANTHER" id="PTHR39321">
    <property type="entry name" value="NICOTINATE-NUCLEOTIDE ADENYLYLTRANSFERASE-RELATED"/>
    <property type="match status" value="1"/>
</dbReference>
<dbReference type="PANTHER" id="PTHR39321:SF3">
    <property type="entry name" value="PHOSPHOPANTETHEINE ADENYLYLTRANSFERASE"/>
    <property type="match status" value="1"/>
</dbReference>
<dbReference type="Pfam" id="PF01467">
    <property type="entry name" value="CTP_transf_like"/>
    <property type="match status" value="1"/>
</dbReference>
<dbReference type="SUPFAM" id="SSF52374">
    <property type="entry name" value="Nucleotidylyl transferase"/>
    <property type="match status" value="1"/>
</dbReference>
<proteinExistence type="inferred from homology"/>